<gene>
    <name evidence="9 13 15" type="primary">nes</name>
    <name evidence="12" type="synonym">nessy</name>
    <name type="ORF">CG9655</name>
</gene>
<sequence>MAEFEEDLPHNGLMDGIASGVGVPVEALRLLLTILAGYPVAALYQKFISVIADKTVHHMFFAGCGAGLCYFNYGLDTYHSLIAILTTYFLVLLLRKKTQIFLAINFVFHMSYLLLGYFYTSSNDYDILWTMPHCILVLRMIGYGFDITDGLKEESELSKDQKETALKKPPSLLELLAFSYFPSGFLVGPQFPFRRYKAFVDGEFRQHEGNVEAGVRRFGAGAFYLIVCQVGLRYLPDSYFLTPEFAQVSFVKRIYLLGFWAKFSLYKYISCWLLTEGALICIGLTYKGEDKNGQPDWSGCSNVKLKLLETGNTMEHYVQSFNVNTNQWVGQYIYKRLKFLNNRTISYGAALGFLAVWHGYHSGYYMTFLMEYMVVSTEKQITRFYTKVVLPQWGHILNNSDIYKLLYFITLKSYNVVYMGWCLTAFVFLKYERWIVVYGAVSYYGFTFLVLWAAFYHTFNHFFRSSSRKLAGEDQKLQDSNTDKLVEEKKPEDKKSE</sequence>
<dbReference type="EC" id="2.3.1.23" evidence="8"/>
<dbReference type="EC" id="2.3.1.n6" evidence="8"/>
<dbReference type="EMBL" id="AE014296">
    <property type="protein sequence ID" value="AAF49181.1"/>
    <property type="molecule type" value="Genomic_DNA"/>
</dbReference>
<dbReference type="EMBL" id="AE014296">
    <property type="protein sequence ID" value="AAN11657.1"/>
    <property type="molecule type" value="Genomic_DNA"/>
</dbReference>
<dbReference type="EMBL" id="AE014296">
    <property type="protein sequence ID" value="AAO41223.1"/>
    <property type="molecule type" value="Genomic_DNA"/>
</dbReference>
<dbReference type="EMBL" id="AF128112">
    <property type="protein sequence ID" value="AAD28257.1"/>
    <property type="molecule type" value="mRNA"/>
</dbReference>
<dbReference type="EMBL" id="AY070936">
    <property type="protein sequence ID" value="AAL48558.1"/>
    <property type="molecule type" value="mRNA"/>
</dbReference>
<dbReference type="RefSeq" id="NP_524157.2">
    <property type="nucleotide sequence ID" value="NM_079433.3"/>
</dbReference>
<dbReference type="RefSeq" id="NP_730390.1">
    <property type="nucleotide sequence ID" value="NM_168788.3"/>
</dbReference>
<dbReference type="RefSeq" id="NP_788527.1">
    <property type="nucleotide sequence ID" value="NM_176349.2"/>
</dbReference>
<dbReference type="SMR" id="Q9VVX5"/>
<dbReference type="BioGRID" id="65369">
    <property type="interactions" value="1"/>
</dbReference>
<dbReference type="FunCoup" id="Q9VVX5">
    <property type="interactions" value="326"/>
</dbReference>
<dbReference type="IntAct" id="Q9VVX5">
    <property type="interactions" value="21"/>
</dbReference>
<dbReference type="STRING" id="7227.FBpp0074786"/>
<dbReference type="SwissLipids" id="SLP:000001062"/>
<dbReference type="GlyCosmos" id="Q9VVX5">
    <property type="glycosylation" value="1 site, No reported glycans"/>
</dbReference>
<dbReference type="GlyGen" id="Q9VVX5">
    <property type="glycosylation" value="1 site"/>
</dbReference>
<dbReference type="iPTMnet" id="Q9VVX5"/>
<dbReference type="PaxDb" id="7227-FBpp0074786"/>
<dbReference type="DNASU" id="40093"/>
<dbReference type="EnsemblMetazoa" id="FBtr0075019">
    <property type="protein sequence ID" value="FBpp0074786"/>
    <property type="gene ID" value="FBgn0026630"/>
</dbReference>
<dbReference type="EnsemblMetazoa" id="FBtr0075020">
    <property type="protein sequence ID" value="FBpp0074787"/>
    <property type="gene ID" value="FBgn0026630"/>
</dbReference>
<dbReference type="EnsemblMetazoa" id="FBtr0075021">
    <property type="protein sequence ID" value="FBpp0074788"/>
    <property type="gene ID" value="FBgn0026630"/>
</dbReference>
<dbReference type="GeneID" id="40093"/>
<dbReference type="KEGG" id="dme:Dmel_CG9655"/>
<dbReference type="UCSC" id="CG9655-RA">
    <property type="organism name" value="d. melanogaster"/>
</dbReference>
<dbReference type="AGR" id="FB:FBgn0026630"/>
<dbReference type="CTD" id="10763"/>
<dbReference type="FlyBase" id="FBgn0026630">
    <property type="gene designation" value="nes"/>
</dbReference>
<dbReference type="VEuPathDB" id="VectorBase:FBgn0026630"/>
<dbReference type="eggNOG" id="KOG2705">
    <property type="taxonomic scope" value="Eukaryota"/>
</dbReference>
<dbReference type="GeneTree" id="ENSGT01030000234564"/>
<dbReference type="HOGENOM" id="CLU_011340_6_0_1"/>
<dbReference type="InParanoid" id="Q9VVX5"/>
<dbReference type="OMA" id="NAWVSRY"/>
<dbReference type="OrthoDB" id="5974730at2759"/>
<dbReference type="PhylomeDB" id="Q9VVX5"/>
<dbReference type="Reactome" id="R-DME-1482788">
    <property type="pathway name" value="Acyl chain remodelling of PC"/>
</dbReference>
<dbReference type="Reactome" id="R-DME-1482801">
    <property type="pathway name" value="Acyl chain remodelling of PS"/>
</dbReference>
<dbReference type="Reactome" id="R-DME-1482839">
    <property type="pathway name" value="Acyl chain remodelling of PE"/>
</dbReference>
<dbReference type="UniPathway" id="UPA00085"/>
<dbReference type="BioGRID-ORCS" id="40093">
    <property type="hits" value="0 hits in 1 CRISPR screen"/>
</dbReference>
<dbReference type="GenomeRNAi" id="40093"/>
<dbReference type="PRO" id="PR:Q9VVX5"/>
<dbReference type="Proteomes" id="UP000000803">
    <property type="component" value="Chromosome 3L"/>
</dbReference>
<dbReference type="Bgee" id="FBgn0026630">
    <property type="expression patterns" value="Expressed in thoracico-abdominal ganglion (Drosophila) and 162 other cell types or tissues"/>
</dbReference>
<dbReference type="GO" id="GO:0005783">
    <property type="term" value="C:endoplasmic reticulum"/>
    <property type="evidence" value="ECO:0007669"/>
    <property type="project" value="UniProtKB-SubCell"/>
</dbReference>
<dbReference type="GO" id="GO:0016020">
    <property type="term" value="C:membrane"/>
    <property type="evidence" value="ECO:0000314"/>
    <property type="project" value="FlyBase"/>
</dbReference>
<dbReference type="GO" id="GO:0047184">
    <property type="term" value="F:1-acylglycerophosphocholine O-acyltransferase activity"/>
    <property type="evidence" value="ECO:0000318"/>
    <property type="project" value="GO_Central"/>
</dbReference>
<dbReference type="GO" id="GO:0106263">
    <property type="term" value="F:1-acylglycerophosphoserine O-acyltransferase activity"/>
    <property type="evidence" value="ECO:0007669"/>
    <property type="project" value="RHEA"/>
</dbReference>
<dbReference type="GO" id="GO:0071617">
    <property type="term" value="F:lysophospholipid acyltransferase activity"/>
    <property type="evidence" value="ECO:0000314"/>
    <property type="project" value="FlyBase"/>
</dbReference>
<dbReference type="GO" id="GO:0008354">
    <property type="term" value="P:germ cell migration"/>
    <property type="evidence" value="ECO:0000316"/>
    <property type="project" value="FlyBase"/>
</dbReference>
<dbReference type="GO" id="GO:0030258">
    <property type="term" value="P:lipid modification"/>
    <property type="evidence" value="ECO:0000315"/>
    <property type="project" value="FlyBase"/>
</dbReference>
<dbReference type="GO" id="GO:0006656">
    <property type="term" value="P:phosphatidylcholine biosynthetic process"/>
    <property type="evidence" value="ECO:0000318"/>
    <property type="project" value="GO_Central"/>
</dbReference>
<dbReference type="GO" id="GO:0036152">
    <property type="term" value="P:phosphatidylethanolamine acyl-chain remodeling"/>
    <property type="evidence" value="ECO:0000318"/>
    <property type="project" value="GO_Central"/>
</dbReference>
<dbReference type="GO" id="GO:0007009">
    <property type="term" value="P:plasma membrane organization"/>
    <property type="evidence" value="ECO:0000316"/>
    <property type="project" value="FlyBase"/>
</dbReference>
<dbReference type="GO" id="GO:0007291">
    <property type="term" value="P:sperm individualization"/>
    <property type="evidence" value="ECO:0000316"/>
    <property type="project" value="FlyBase"/>
</dbReference>
<dbReference type="InterPro" id="IPR049941">
    <property type="entry name" value="LPLAT_7/PORCN-like"/>
</dbReference>
<dbReference type="InterPro" id="IPR004299">
    <property type="entry name" value="MBOAT_fam"/>
</dbReference>
<dbReference type="PANTHER" id="PTHR13906:SF14">
    <property type="entry name" value="LYSOPHOSPHOLIPID ACYLTRANSFERASE 5"/>
    <property type="match status" value="1"/>
</dbReference>
<dbReference type="PANTHER" id="PTHR13906">
    <property type="entry name" value="PORCUPINE"/>
    <property type="match status" value="1"/>
</dbReference>
<dbReference type="Pfam" id="PF03062">
    <property type="entry name" value="MBOAT"/>
    <property type="match status" value="1"/>
</dbReference>
<name>MBOA5_DROME</name>
<reference evidence="13" key="1">
    <citation type="journal article" date="2000" name="Science">
        <title>The genome sequence of Drosophila melanogaster.</title>
        <authorList>
            <person name="Adams M.D."/>
            <person name="Celniker S.E."/>
            <person name="Holt R.A."/>
            <person name="Evans C.A."/>
            <person name="Gocayne J.D."/>
            <person name="Amanatides P.G."/>
            <person name="Scherer S.E."/>
            <person name="Li P.W."/>
            <person name="Hoskins R.A."/>
            <person name="Galle R.F."/>
            <person name="George R.A."/>
            <person name="Lewis S.E."/>
            <person name="Richards S."/>
            <person name="Ashburner M."/>
            <person name="Henderson S.N."/>
            <person name="Sutton G.G."/>
            <person name="Wortman J.R."/>
            <person name="Yandell M.D."/>
            <person name="Zhang Q."/>
            <person name="Chen L.X."/>
            <person name="Brandon R.C."/>
            <person name="Rogers Y.-H.C."/>
            <person name="Blazej R.G."/>
            <person name="Champe M."/>
            <person name="Pfeiffer B.D."/>
            <person name="Wan K.H."/>
            <person name="Doyle C."/>
            <person name="Baxter E.G."/>
            <person name="Helt G."/>
            <person name="Nelson C.R."/>
            <person name="Miklos G.L.G."/>
            <person name="Abril J.F."/>
            <person name="Agbayani A."/>
            <person name="An H.-J."/>
            <person name="Andrews-Pfannkoch C."/>
            <person name="Baldwin D."/>
            <person name="Ballew R.M."/>
            <person name="Basu A."/>
            <person name="Baxendale J."/>
            <person name="Bayraktaroglu L."/>
            <person name="Beasley E.M."/>
            <person name="Beeson K.Y."/>
            <person name="Benos P.V."/>
            <person name="Berman B.P."/>
            <person name="Bhandari D."/>
            <person name="Bolshakov S."/>
            <person name="Borkova D."/>
            <person name="Botchan M.R."/>
            <person name="Bouck J."/>
            <person name="Brokstein P."/>
            <person name="Brottier P."/>
            <person name="Burtis K.C."/>
            <person name="Busam D.A."/>
            <person name="Butler H."/>
            <person name="Cadieu E."/>
            <person name="Center A."/>
            <person name="Chandra I."/>
            <person name="Cherry J.M."/>
            <person name="Cawley S."/>
            <person name="Dahlke C."/>
            <person name="Davenport L.B."/>
            <person name="Davies P."/>
            <person name="de Pablos B."/>
            <person name="Delcher A."/>
            <person name="Deng Z."/>
            <person name="Mays A.D."/>
            <person name="Dew I."/>
            <person name="Dietz S.M."/>
            <person name="Dodson K."/>
            <person name="Doup L.E."/>
            <person name="Downes M."/>
            <person name="Dugan-Rocha S."/>
            <person name="Dunkov B.C."/>
            <person name="Dunn P."/>
            <person name="Durbin K.J."/>
            <person name="Evangelista C.C."/>
            <person name="Ferraz C."/>
            <person name="Ferriera S."/>
            <person name="Fleischmann W."/>
            <person name="Fosler C."/>
            <person name="Gabrielian A.E."/>
            <person name="Garg N.S."/>
            <person name="Gelbart W.M."/>
            <person name="Glasser K."/>
            <person name="Glodek A."/>
            <person name="Gong F."/>
            <person name="Gorrell J.H."/>
            <person name="Gu Z."/>
            <person name="Guan P."/>
            <person name="Harris M."/>
            <person name="Harris N.L."/>
            <person name="Harvey D.A."/>
            <person name="Heiman T.J."/>
            <person name="Hernandez J.R."/>
            <person name="Houck J."/>
            <person name="Hostin D."/>
            <person name="Houston K.A."/>
            <person name="Howland T.J."/>
            <person name="Wei M.-H."/>
            <person name="Ibegwam C."/>
            <person name="Jalali M."/>
            <person name="Kalush F."/>
            <person name="Karpen G.H."/>
            <person name="Ke Z."/>
            <person name="Kennison J.A."/>
            <person name="Ketchum K.A."/>
            <person name="Kimmel B.E."/>
            <person name="Kodira C.D."/>
            <person name="Kraft C.L."/>
            <person name="Kravitz S."/>
            <person name="Kulp D."/>
            <person name="Lai Z."/>
            <person name="Lasko P."/>
            <person name="Lei Y."/>
            <person name="Levitsky A.A."/>
            <person name="Li J.H."/>
            <person name="Li Z."/>
            <person name="Liang Y."/>
            <person name="Lin X."/>
            <person name="Liu X."/>
            <person name="Mattei B."/>
            <person name="McIntosh T.C."/>
            <person name="McLeod M.P."/>
            <person name="McPherson D."/>
            <person name="Merkulov G."/>
            <person name="Milshina N.V."/>
            <person name="Mobarry C."/>
            <person name="Morris J."/>
            <person name="Moshrefi A."/>
            <person name="Mount S.M."/>
            <person name="Moy M."/>
            <person name="Murphy B."/>
            <person name="Murphy L."/>
            <person name="Muzny D.M."/>
            <person name="Nelson D.L."/>
            <person name="Nelson D.R."/>
            <person name="Nelson K.A."/>
            <person name="Nixon K."/>
            <person name="Nusskern D.R."/>
            <person name="Pacleb J.M."/>
            <person name="Palazzolo M."/>
            <person name="Pittman G.S."/>
            <person name="Pan S."/>
            <person name="Pollard J."/>
            <person name="Puri V."/>
            <person name="Reese M.G."/>
            <person name="Reinert K."/>
            <person name="Remington K."/>
            <person name="Saunders R.D.C."/>
            <person name="Scheeler F."/>
            <person name="Shen H."/>
            <person name="Shue B.C."/>
            <person name="Siden-Kiamos I."/>
            <person name="Simpson M."/>
            <person name="Skupski M.P."/>
            <person name="Smith T.J."/>
            <person name="Spier E."/>
            <person name="Spradling A.C."/>
            <person name="Stapleton M."/>
            <person name="Strong R."/>
            <person name="Sun E."/>
            <person name="Svirskas R."/>
            <person name="Tector C."/>
            <person name="Turner R."/>
            <person name="Venter E."/>
            <person name="Wang A.H."/>
            <person name="Wang X."/>
            <person name="Wang Z.-Y."/>
            <person name="Wassarman D.A."/>
            <person name="Weinstock G.M."/>
            <person name="Weissenbach J."/>
            <person name="Williams S.M."/>
            <person name="Woodage T."/>
            <person name="Worley K.C."/>
            <person name="Wu D."/>
            <person name="Yang S."/>
            <person name="Yao Q.A."/>
            <person name="Ye J."/>
            <person name="Yeh R.-F."/>
            <person name="Zaveri J.S."/>
            <person name="Zhan M."/>
            <person name="Zhang G."/>
            <person name="Zhao Q."/>
            <person name="Zheng L."/>
            <person name="Zheng X.H."/>
            <person name="Zhong F.N."/>
            <person name="Zhong W."/>
            <person name="Zhou X."/>
            <person name="Zhu S.C."/>
            <person name="Zhu X."/>
            <person name="Smith H.O."/>
            <person name="Gibbs R.A."/>
            <person name="Myers E.W."/>
            <person name="Rubin G.M."/>
            <person name="Venter J.C."/>
        </authorList>
    </citation>
    <scope>NUCLEOTIDE SEQUENCE [LARGE SCALE GENOMIC DNA]</scope>
    <source>
        <strain evidence="5">Berkeley</strain>
    </source>
</reference>
<reference evidence="13" key="2">
    <citation type="journal article" date="2002" name="Genome Biol.">
        <title>Annotation of the Drosophila melanogaster euchromatic genome: a systematic review.</title>
        <authorList>
            <person name="Misra S."/>
            <person name="Crosby M.A."/>
            <person name="Mungall C.J."/>
            <person name="Matthews B.B."/>
            <person name="Campbell K.S."/>
            <person name="Hradecky P."/>
            <person name="Huang Y."/>
            <person name="Kaminker J.S."/>
            <person name="Millburn G.H."/>
            <person name="Prochnik S.E."/>
            <person name="Smith C.D."/>
            <person name="Tupy J.L."/>
            <person name="Whitfield E.J."/>
            <person name="Bayraktaroglu L."/>
            <person name="Berman B.P."/>
            <person name="Bettencourt B.R."/>
            <person name="Celniker S.E."/>
            <person name="de Grey A.D.N.J."/>
            <person name="Drysdale R.A."/>
            <person name="Harris N.L."/>
            <person name="Richter J."/>
            <person name="Russo S."/>
            <person name="Schroeder A.J."/>
            <person name="Shu S.Q."/>
            <person name="Stapleton M."/>
            <person name="Yamada C."/>
            <person name="Ashburner M."/>
            <person name="Gelbart W.M."/>
            <person name="Rubin G.M."/>
            <person name="Lewis S.E."/>
        </authorList>
    </citation>
    <scope>GENOME REANNOTATION</scope>
    <source>
        <strain>Berkeley</strain>
    </source>
</reference>
<reference evidence="12" key="3">
    <citation type="journal article" date="1999" name="Mech. Dev.">
        <title>nessy, an evolutionary conserved gene controlled by Hox proteins during Drosophila embryogenesis.</title>
        <authorList>
            <person name="Maurel-Zaffran C."/>
            <person name="Chauvet S."/>
            <person name="Jullien N."/>
            <person name="Miassod R."/>
            <person name="Pradel J."/>
            <person name="Aragnol D."/>
        </authorList>
    </citation>
    <scope>NUCLEOTIDE SEQUENCE [MRNA]</scope>
    <scope>TISSUE SPECIFICITY</scope>
    <scope>DEVELOPMENTAL STAGE</scope>
    <source>
        <strain evidence="4">Oregon-R</strain>
    </source>
</reference>
<reference evidence="14" key="4">
    <citation type="journal article" date="2002" name="Genome Biol.">
        <title>A Drosophila full-length cDNA resource.</title>
        <authorList>
            <person name="Stapleton M."/>
            <person name="Carlson J.W."/>
            <person name="Brokstein P."/>
            <person name="Yu C."/>
            <person name="Champe M."/>
            <person name="George R.A."/>
            <person name="Guarin H."/>
            <person name="Kronmiller B."/>
            <person name="Pacleb J.M."/>
            <person name="Park S."/>
            <person name="Wan K.H."/>
            <person name="Rubin G.M."/>
            <person name="Celniker S.E."/>
        </authorList>
    </citation>
    <scope>NUCLEOTIDE SEQUENCE [LARGE SCALE MRNA]</scope>
    <source>
        <strain evidence="6">Berkeley</strain>
        <tissue evidence="6">Embryo</tissue>
    </source>
</reference>
<reference key="5">
    <citation type="journal article" date="2008" name="J. Proteome Res.">
        <title>Phosphoproteome analysis of Drosophila melanogaster embryos.</title>
        <authorList>
            <person name="Zhai B."/>
            <person name="Villen J."/>
            <person name="Beausoleil S.A."/>
            <person name="Mintseris J."/>
            <person name="Gygi S.P."/>
        </authorList>
    </citation>
    <scope>PHOSPHORYLATION [LARGE SCALE ANALYSIS] AT SER-480</scope>
    <scope>IDENTIFICATION BY MASS SPECTROMETRY</scope>
    <source>
        <tissue>Embryo</tissue>
    </source>
</reference>
<reference key="6">
    <citation type="journal article" date="2009" name="Mol. Biol. Cell">
        <title>Drosophila lysophospholipid acyltransferases are specifically required for germ cell development.</title>
        <authorList>
            <person name="Steinhauer J."/>
            <person name="Gijon M.A."/>
            <person name="Riekhof W.R."/>
            <person name="Voelker D.R."/>
            <person name="Murphy R.C."/>
            <person name="Treisman J.E."/>
        </authorList>
    </citation>
    <scope>FUNCTION</scope>
    <scope>CATALYTIC ACTIVITY</scope>
    <scope>PATHWAY</scope>
    <scope>SUBCELLULAR LOCATION</scope>
</reference>
<feature type="chain" id="PRO_0000233380" description="Lysophospholipid acyltransferase 5">
    <location>
        <begin position="1"/>
        <end position="497"/>
    </location>
</feature>
<feature type="transmembrane region" description="Helical" evidence="2">
    <location>
        <begin position="31"/>
        <end position="51"/>
    </location>
</feature>
<feature type="transmembrane region" description="Helical" evidence="2">
    <location>
        <begin position="74"/>
        <end position="94"/>
    </location>
</feature>
<feature type="transmembrane region" description="Helical" evidence="2">
    <location>
        <begin position="100"/>
        <end position="120"/>
    </location>
</feature>
<feature type="transmembrane region" description="Helical" evidence="2">
    <location>
        <begin position="173"/>
        <end position="193"/>
    </location>
</feature>
<feature type="transmembrane region" description="Helical" evidence="2">
    <location>
        <begin position="213"/>
        <end position="235"/>
    </location>
</feature>
<feature type="transmembrane region" description="Helical" evidence="2">
    <location>
        <begin position="264"/>
        <end position="286"/>
    </location>
</feature>
<feature type="transmembrane region" description="Helical" evidence="2">
    <location>
        <begin position="339"/>
        <end position="361"/>
    </location>
</feature>
<feature type="transmembrane region" description="Helical" evidence="2">
    <location>
        <begin position="408"/>
        <end position="428"/>
    </location>
</feature>
<feature type="transmembrane region" description="Helical" evidence="2">
    <location>
        <begin position="435"/>
        <end position="455"/>
    </location>
</feature>
<feature type="region of interest" description="Disordered" evidence="3">
    <location>
        <begin position="469"/>
        <end position="497"/>
    </location>
</feature>
<feature type="compositionally biased region" description="Basic and acidic residues" evidence="3">
    <location>
        <begin position="470"/>
        <end position="497"/>
    </location>
</feature>
<feature type="active site" evidence="1">
    <location>
        <position position="322"/>
    </location>
</feature>
<feature type="active site" evidence="1">
    <location>
        <position position="358"/>
    </location>
</feature>
<feature type="modified residue" description="Phosphoserine" evidence="7">
    <location>
        <position position="480"/>
    </location>
</feature>
<feature type="glycosylation site" description="N-linked (GlcNAc...) asparagine" evidence="2">
    <location>
        <position position="398"/>
    </location>
</feature>
<feature type="sequence conflict" description="In Ref. 3; AAD28257." evidence="11" ref="3">
    <original>L</original>
    <variation>R</variation>
    <location>
        <position position="75"/>
    </location>
</feature>
<protein>
    <recommendedName>
        <fullName>Lysophospholipid acyltransferase 5</fullName>
        <shortName>LPLAT 5</shortName>
    </recommendedName>
    <alternativeName>
        <fullName>1-acylglycerophosphocholine O-acyltransferase</fullName>
        <ecNumber evidence="8">2.3.1.23</ecNumber>
    </alternativeName>
    <alternativeName>
        <fullName>1-acylglycerophosphoserine O-acyltransferase</fullName>
        <ecNumber evidence="8">2.3.1.n6</ecNumber>
    </alternativeName>
    <alternativeName>
        <fullName>Lysophosphatidylcholine acyltransferase</fullName>
        <shortName>LPCAT</shortName>
        <shortName>Lyso-PC acyltransferase</shortName>
    </alternativeName>
    <alternativeName>
        <fullName>Lysophosphatidylserine acyltransferase</fullName>
        <shortName>LPSAT</shortName>
        <shortName>Lyso-PS acyltransferase</shortName>
    </alternativeName>
    <alternativeName>
        <fullName>Membrane-bound O-acyltransferase domain-containing protein 5</fullName>
        <shortName>O-acyltransferase domain-containing protein 5</shortName>
    </alternativeName>
    <alternativeName>
        <fullName evidence="9 10">Protein nessy</fullName>
        <shortName evidence="9 10">Nes</shortName>
    </alternativeName>
</protein>
<organism>
    <name type="scientific">Drosophila melanogaster</name>
    <name type="common">Fruit fly</name>
    <dbReference type="NCBI Taxonomy" id="7227"/>
    <lineage>
        <taxon>Eukaryota</taxon>
        <taxon>Metazoa</taxon>
        <taxon>Ecdysozoa</taxon>
        <taxon>Arthropoda</taxon>
        <taxon>Hexapoda</taxon>
        <taxon>Insecta</taxon>
        <taxon>Pterygota</taxon>
        <taxon>Neoptera</taxon>
        <taxon>Endopterygota</taxon>
        <taxon>Diptera</taxon>
        <taxon>Brachycera</taxon>
        <taxon>Muscomorpha</taxon>
        <taxon>Ephydroidea</taxon>
        <taxon>Drosophilidae</taxon>
        <taxon>Drosophila</taxon>
        <taxon>Sophophora</taxon>
    </lineage>
</organism>
<accession>Q9VVX5</accession>
<accession>A4V238</accession>
<accession>Q9XYV9</accession>
<evidence type="ECO:0000250" key="1">
    <source>
        <dbReference type="UniProtKB" id="P0C7A3"/>
    </source>
</evidence>
<evidence type="ECO:0000255" key="2"/>
<evidence type="ECO:0000256" key="3">
    <source>
        <dbReference type="SAM" id="MobiDB-lite"/>
    </source>
</evidence>
<evidence type="ECO:0000269" key="4">
    <source>
    </source>
</evidence>
<evidence type="ECO:0000269" key="5">
    <source>
    </source>
</evidence>
<evidence type="ECO:0000269" key="6">
    <source>
    </source>
</evidence>
<evidence type="ECO:0000269" key="7">
    <source>
    </source>
</evidence>
<evidence type="ECO:0000269" key="8">
    <source>
    </source>
</evidence>
<evidence type="ECO:0000303" key="9">
    <source>
    </source>
</evidence>
<evidence type="ECO:0000303" key="10">
    <source>
    </source>
</evidence>
<evidence type="ECO:0000305" key="11"/>
<evidence type="ECO:0000312" key="12">
    <source>
        <dbReference type="EMBL" id="AAD28257.1"/>
    </source>
</evidence>
<evidence type="ECO:0000312" key="13">
    <source>
        <dbReference type="EMBL" id="AAF49181.1"/>
    </source>
</evidence>
<evidence type="ECO:0000312" key="14">
    <source>
        <dbReference type="EMBL" id="AAL48558.1"/>
    </source>
</evidence>
<evidence type="ECO:0000312" key="15">
    <source>
        <dbReference type="FlyBase" id="FBgn0026630"/>
    </source>
</evidence>
<keyword id="KW-0012">Acyltransferase</keyword>
<keyword id="KW-0256">Endoplasmic reticulum</keyword>
<keyword id="KW-0325">Glycoprotein</keyword>
<keyword id="KW-0444">Lipid biosynthesis</keyword>
<keyword id="KW-0443">Lipid metabolism</keyword>
<keyword id="KW-0472">Membrane</keyword>
<keyword id="KW-0594">Phospholipid biosynthesis</keyword>
<keyword id="KW-1208">Phospholipid metabolism</keyword>
<keyword id="KW-0597">Phosphoprotein</keyword>
<keyword id="KW-1185">Reference proteome</keyword>
<keyword id="KW-0808">Transferase</keyword>
<keyword id="KW-0812">Transmembrane</keyword>
<keyword id="KW-1133">Transmembrane helix</keyword>
<comment type="function">
    <text evidence="8">Acyltransferase that mediates the acylation of lysophospholipids to produce phospholipids (glycerophospholipids). Highest activity with lysophosphatidylcholine (1-acyl-sn-glycero-3-phosphocholine or LPC) producing phosphatidylcholine (1,2-diacyl-sn-glycero-3-phosphocholine or PC) (LPCAT activity), but also converts lysophosphatidylserine (1-acyl-2-hydroxy-sn-glycero-3-phospho-L-serine or LPS) to phosphatidylserine (1,2-diacyl-sn-glycero-3-phospho-L-serine or PS) (LPSAT activity). Has a preference for unsaturated fatty acids of at least 16 carbons such as oleoyl-CoA ((9Z)-octadecenoyl-CoA) and palmitoleoyl-CoA ((9Z)-hexadecenoyl-CoA). Glycerophospholipids are important structural and functional components of cellular membrane, acyl-chain remodeling regulates the molecular species distribution of glycerophospholipids which can affect membrane fluidity and curvature. Essential for fertility and viability together with Oysgedart (Oys). Required for germ cells to migrate into the mesoderm.</text>
</comment>
<comment type="catalytic activity">
    <reaction evidence="8">
        <text>a 1-acyl-sn-glycero-3-phospho-L-serine + an acyl-CoA = a 1,2-diacyl-sn-glycero-3-phospho-L-serine + CoA</text>
        <dbReference type="Rhea" id="RHEA:33191"/>
        <dbReference type="ChEBI" id="CHEBI:57262"/>
        <dbReference type="ChEBI" id="CHEBI:57287"/>
        <dbReference type="ChEBI" id="CHEBI:58342"/>
        <dbReference type="ChEBI" id="CHEBI:64379"/>
        <dbReference type="EC" id="2.3.1.n6"/>
    </reaction>
    <physiologicalReaction direction="left-to-right" evidence="8">
        <dbReference type="Rhea" id="RHEA:33192"/>
    </physiologicalReaction>
</comment>
<comment type="catalytic activity">
    <reaction evidence="8">
        <text>1-(9Z-octadecenoyl)-sn-glycero-3-phospho-L-serine + (9Z)-hexadecenoyl-CoA = 1-(9Z-octadecenoyl)-2-(9Z-hexadecenoyl)-sn-glycero-3-phospho-L-serine + CoA</text>
        <dbReference type="Rhea" id="RHEA:37399"/>
        <dbReference type="ChEBI" id="CHEBI:57287"/>
        <dbReference type="ChEBI" id="CHEBI:61540"/>
        <dbReference type="ChEBI" id="CHEBI:74617"/>
        <dbReference type="ChEBI" id="CHEBI:74901"/>
    </reaction>
    <physiologicalReaction direction="left-to-right" evidence="8">
        <dbReference type="Rhea" id="RHEA:37400"/>
    </physiologicalReaction>
</comment>
<comment type="catalytic activity">
    <reaction evidence="8">
        <text>a 1-acyl-sn-glycero-3-phosphocholine + an acyl-CoA = a 1,2-diacyl-sn-glycero-3-phosphocholine + CoA</text>
        <dbReference type="Rhea" id="RHEA:12937"/>
        <dbReference type="ChEBI" id="CHEBI:57287"/>
        <dbReference type="ChEBI" id="CHEBI:57643"/>
        <dbReference type="ChEBI" id="CHEBI:58168"/>
        <dbReference type="ChEBI" id="CHEBI:58342"/>
        <dbReference type="EC" id="2.3.1.23"/>
    </reaction>
    <physiologicalReaction direction="left-to-right" evidence="8">
        <dbReference type="Rhea" id="RHEA:12938"/>
    </physiologicalReaction>
</comment>
<comment type="catalytic activity">
    <reaction evidence="8">
        <text>1-hexadecanoyl-sn-glycero-3-phosphocholine + (9Z)-octadecenoyl-CoA = 1-hexadecanoyl-2-(9Z-octadecenoyl)-sn-glycero-3-phosphocholine + CoA</text>
        <dbReference type="Rhea" id="RHEA:35991"/>
        <dbReference type="ChEBI" id="CHEBI:57287"/>
        <dbReference type="ChEBI" id="CHEBI:57387"/>
        <dbReference type="ChEBI" id="CHEBI:72998"/>
        <dbReference type="ChEBI" id="CHEBI:73001"/>
    </reaction>
    <physiologicalReaction direction="left-to-right" evidence="8">
        <dbReference type="Rhea" id="RHEA:35992"/>
    </physiologicalReaction>
</comment>
<comment type="catalytic activity">
    <reaction evidence="8">
        <text>(9Z,12Z)-octadecadienoyl-CoA + 1-hexadecanoyl-sn-glycero-3-phosphocholine = 1-hexadecanoyl-2-(9Z,12Z-octadecadienoyl)-sn-glycero-3-phosphocholine + CoA</text>
        <dbReference type="Rhea" id="RHEA:35995"/>
        <dbReference type="ChEBI" id="CHEBI:57287"/>
        <dbReference type="ChEBI" id="CHEBI:57383"/>
        <dbReference type="ChEBI" id="CHEBI:72998"/>
        <dbReference type="ChEBI" id="CHEBI:73002"/>
    </reaction>
    <physiologicalReaction direction="left-to-right" evidence="8">
        <dbReference type="Rhea" id="RHEA:35996"/>
    </physiologicalReaction>
</comment>
<comment type="catalytic activity">
    <reaction evidence="8">
        <text>(5Z,8Z,11Z,14Z)-eicosatetraenoyl-CoA + 1-hexadecanoyl-sn-glycero-3-phosphocholine = 1-hexadecanoyl-2-(5Z,8Z,11Z,14Z-eicosatetraenoyl)-sn-glycero-3-phosphocholine + CoA</text>
        <dbReference type="Rhea" id="RHEA:35999"/>
        <dbReference type="ChEBI" id="CHEBI:57287"/>
        <dbReference type="ChEBI" id="CHEBI:57368"/>
        <dbReference type="ChEBI" id="CHEBI:72998"/>
        <dbReference type="ChEBI" id="CHEBI:73003"/>
    </reaction>
    <physiologicalReaction direction="left-to-right" evidence="8">
        <dbReference type="Rhea" id="RHEA:36000"/>
    </physiologicalReaction>
</comment>
<comment type="catalytic activity">
    <reaction evidence="8">
        <text>(9Z)-hexadecenoyl-CoA + 1-hexadecanoyl-sn-glycero-3-phosphocholine = 1-hexadecanoyl-2-(9Z-hexadecenoyl)-sn-glycero-3-phosphocholine + CoA</text>
        <dbReference type="Rhea" id="RHEA:37207"/>
        <dbReference type="ChEBI" id="CHEBI:57287"/>
        <dbReference type="ChEBI" id="CHEBI:61540"/>
        <dbReference type="ChEBI" id="CHEBI:72998"/>
        <dbReference type="ChEBI" id="CHEBI:74000"/>
    </reaction>
    <physiologicalReaction direction="left-to-right" evidence="8">
        <dbReference type="Rhea" id="RHEA:37208"/>
    </physiologicalReaction>
</comment>
<comment type="pathway">
    <text evidence="8">Lipid metabolism; phospholipid metabolism.</text>
</comment>
<comment type="subcellular location">
    <subcellularLocation>
        <location evidence="8">Endoplasmic reticulum</location>
    </subcellularLocation>
    <subcellularLocation>
        <location evidence="8">Membrane</location>
        <topology evidence="11">Multi-pass membrane protein</topology>
    </subcellularLocation>
</comment>
<comment type="tissue specificity">
    <text evidence="4">During gastrulation, expressed mainly along the midline in the presumptive mesoderm. During germ band elongation, expressed in mesoderm and endoderm primordia and in the cephalic furrow. Expression in mesoderm and endoderm lineages continues during germ band shortening. At the end of this process, no longer detected in somatic mesoderm or endoderm layer with expression restricted to anterior and posterior domains of the visceral mesoderm.</text>
</comment>
<comment type="developmental stage">
    <text evidence="4">Expressed throughout development with highest levels in adult females and preblastoderm embryos.</text>
</comment>
<comment type="similarity">
    <text evidence="11">Belongs to the membrane-bound acyltransferase family.</text>
</comment>
<comment type="caution">
    <text evidence="11">Although strongly related to the membrane-bound acyltransferase family, it lacks the conserved His active site which is replaced by an Asn-415 residue.</text>
</comment>
<proteinExistence type="evidence at protein level"/>